<sequence length="453" mass="47711">MNIVILAAGTGKRMRSALPKVLHPLAGRPLLSHVIDTARALAPSRLVVVIGHGAERVRAAVAAPDVQFAVQEQQLGTGHAVRQALPLLDPSQPTLVLYGDVPLTRAATLRRLADAATDARYGVLTVTLDDPTGYGRIVRDQAGCVTRIVEQKDASADELKIAEINTGIVVAPTAQLSMWLGALGNDNAQGEYYLTDVVEQAIEAGFEIVTTQPDDEWETLGVNSKAQLAELERIHQRKLAEALLADGVTLADPARIDVRGKLTCGRDVSIDVNCVFEGDVTLADGVTIGANCVIRNAAIAAGARVDAFSHLDGATLGANTVVGPYARLRPGAVLADDAHVGNFVEVKNATLGHGSKANHLTYLGDADIGARVNVGAGTITCNYDGANKFRTVIEDDVFVGSDTQFVAPVRVGRGVTVAAGTTVWKDVAEGMLVLNDKTQTAKSGYVRPVKKKS</sequence>
<feature type="chain" id="PRO_0000244291" description="Bifunctional protein GlmU">
    <location>
        <begin position="1"/>
        <end position="453"/>
    </location>
</feature>
<feature type="region of interest" description="Pyrophosphorylase" evidence="1">
    <location>
        <begin position="1"/>
        <end position="225"/>
    </location>
</feature>
<feature type="region of interest" description="Linker" evidence="1">
    <location>
        <begin position="226"/>
        <end position="246"/>
    </location>
</feature>
<feature type="region of interest" description="N-acetyltransferase" evidence="1">
    <location>
        <begin position="247"/>
        <end position="453"/>
    </location>
</feature>
<feature type="active site" description="Proton acceptor" evidence="1">
    <location>
        <position position="359"/>
    </location>
</feature>
<feature type="binding site" evidence="1">
    <location>
        <begin position="6"/>
        <end position="9"/>
    </location>
    <ligand>
        <name>UDP-N-acetyl-alpha-D-glucosamine</name>
        <dbReference type="ChEBI" id="CHEBI:57705"/>
    </ligand>
</feature>
<feature type="binding site" evidence="1">
    <location>
        <position position="20"/>
    </location>
    <ligand>
        <name>UDP-N-acetyl-alpha-D-glucosamine</name>
        <dbReference type="ChEBI" id="CHEBI:57705"/>
    </ligand>
</feature>
<feature type="binding site" evidence="1">
    <location>
        <position position="71"/>
    </location>
    <ligand>
        <name>UDP-N-acetyl-alpha-D-glucosamine</name>
        <dbReference type="ChEBI" id="CHEBI:57705"/>
    </ligand>
</feature>
<feature type="binding site" evidence="1">
    <location>
        <begin position="76"/>
        <end position="77"/>
    </location>
    <ligand>
        <name>UDP-N-acetyl-alpha-D-glucosamine</name>
        <dbReference type="ChEBI" id="CHEBI:57705"/>
    </ligand>
</feature>
<feature type="binding site" evidence="1">
    <location>
        <begin position="98"/>
        <end position="100"/>
    </location>
    <ligand>
        <name>UDP-N-acetyl-alpha-D-glucosamine</name>
        <dbReference type="ChEBI" id="CHEBI:57705"/>
    </ligand>
</feature>
<feature type="binding site" evidence="1">
    <location>
        <position position="100"/>
    </location>
    <ligand>
        <name>Mg(2+)</name>
        <dbReference type="ChEBI" id="CHEBI:18420"/>
    </ligand>
</feature>
<feature type="binding site" evidence="1">
    <location>
        <position position="135"/>
    </location>
    <ligand>
        <name>UDP-N-acetyl-alpha-D-glucosamine</name>
        <dbReference type="ChEBI" id="CHEBI:57705"/>
    </ligand>
</feature>
<feature type="binding site" evidence="1">
    <location>
        <position position="150"/>
    </location>
    <ligand>
        <name>UDP-N-acetyl-alpha-D-glucosamine</name>
        <dbReference type="ChEBI" id="CHEBI:57705"/>
    </ligand>
</feature>
<feature type="binding site" evidence="1">
    <location>
        <position position="165"/>
    </location>
    <ligand>
        <name>UDP-N-acetyl-alpha-D-glucosamine</name>
        <dbReference type="ChEBI" id="CHEBI:57705"/>
    </ligand>
</feature>
<feature type="binding site" evidence="1">
    <location>
        <position position="223"/>
    </location>
    <ligand>
        <name>Mg(2+)</name>
        <dbReference type="ChEBI" id="CHEBI:18420"/>
    </ligand>
</feature>
<feature type="binding site" evidence="1">
    <location>
        <position position="223"/>
    </location>
    <ligand>
        <name>UDP-N-acetyl-alpha-D-glucosamine</name>
        <dbReference type="ChEBI" id="CHEBI:57705"/>
    </ligand>
</feature>
<feature type="binding site" evidence="1">
    <location>
        <position position="329"/>
    </location>
    <ligand>
        <name>UDP-N-acetyl-alpha-D-glucosamine</name>
        <dbReference type="ChEBI" id="CHEBI:57705"/>
    </ligand>
</feature>
<feature type="binding site" evidence="1">
    <location>
        <position position="347"/>
    </location>
    <ligand>
        <name>UDP-N-acetyl-alpha-D-glucosamine</name>
        <dbReference type="ChEBI" id="CHEBI:57705"/>
    </ligand>
</feature>
<feature type="binding site" evidence="1">
    <location>
        <position position="362"/>
    </location>
    <ligand>
        <name>UDP-N-acetyl-alpha-D-glucosamine</name>
        <dbReference type="ChEBI" id="CHEBI:57705"/>
    </ligand>
</feature>
<feature type="binding site" evidence="1">
    <location>
        <position position="373"/>
    </location>
    <ligand>
        <name>UDP-N-acetyl-alpha-D-glucosamine</name>
        <dbReference type="ChEBI" id="CHEBI:57705"/>
    </ligand>
</feature>
<feature type="binding site" evidence="1">
    <location>
        <position position="376"/>
    </location>
    <ligand>
        <name>acetyl-CoA</name>
        <dbReference type="ChEBI" id="CHEBI:57288"/>
    </ligand>
</feature>
<feature type="binding site" evidence="1">
    <location>
        <begin position="382"/>
        <end position="383"/>
    </location>
    <ligand>
        <name>acetyl-CoA</name>
        <dbReference type="ChEBI" id="CHEBI:57288"/>
    </ligand>
</feature>
<feature type="binding site" evidence="1">
    <location>
        <position position="401"/>
    </location>
    <ligand>
        <name>acetyl-CoA</name>
        <dbReference type="ChEBI" id="CHEBI:57288"/>
    </ligand>
</feature>
<feature type="binding site" evidence="1">
    <location>
        <position position="419"/>
    </location>
    <ligand>
        <name>acetyl-CoA</name>
        <dbReference type="ChEBI" id="CHEBI:57288"/>
    </ligand>
</feature>
<evidence type="ECO:0000255" key="1">
    <source>
        <dbReference type="HAMAP-Rule" id="MF_01631"/>
    </source>
</evidence>
<evidence type="ECO:0000305" key="2"/>
<organism>
    <name type="scientific">Burkholderia thailandensis (strain ATCC 700388 / DSM 13276 / CCUG 48851 / CIP 106301 / E264)</name>
    <dbReference type="NCBI Taxonomy" id="271848"/>
    <lineage>
        <taxon>Bacteria</taxon>
        <taxon>Pseudomonadati</taxon>
        <taxon>Pseudomonadota</taxon>
        <taxon>Betaproteobacteria</taxon>
        <taxon>Burkholderiales</taxon>
        <taxon>Burkholderiaceae</taxon>
        <taxon>Burkholderia</taxon>
        <taxon>pseudomallei group</taxon>
    </lineage>
</organism>
<name>GLMU_BURTA</name>
<keyword id="KW-0012">Acyltransferase</keyword>
<keyword id="KW-0133">Cell shape</keyword>
<keyword id="KW-0961">Cell wall biogenesis/degradation</keyword>
<keyword id="KW-0963">Cytoplasm</keyword>
<keyword id="KW-0460">Magnesium</keyword>
<keyword id="KW-0479">Metal-binding</keyword>
<keyword id="KW-0511">Multifunctional enzyme</keyword>
<keyword id="KW-0548">Nucleotidyltransferase</keyword>
<keyword id="KW-0573">Peptidoglycan synthesis</keyword>
<keyword id="KW-0677">Repeat</keyword>
<keyword id="KW-0808">Transferase</keyword>
<proteinExistence type="inferred from homology"/>
<gene>
    <name evidence="1" type="primary">glmU</name>
    <name type="ordered locus">BTH_I0289</name>
</gene>
<comment type="function">
    <text evidence="1">Catalyzes the last two sequential reactions in the de novo biosynthetic pathway for UDP-N-acetylglucosamine (UDP-GlcNAc). The C-terminal domain catalyzes the transfer of acetyl group from acetyl coenzyme A to glucosamine-1-phosphate (GlcN-1-P) to produce N-acetylglucosamine-1-phosphate (GlcNAc-1-P), which is converted into UDP-GlcNAc by the transfer of uridine 5-monophosphate (from uridine 5-triphosphate), a reaction catalyzed by the N-terminal domain.</text>
</comment>
<comment type="catalytic activity">
    <reaction evidence="1">
        <text>alpha-D-glucosamine 1-phosphate + acetyl-CoA = N-acetyl-alpha-D-glucosamine 1-phosphate + CoA + H(+)</text>
        <dbReference type="Rhea" id="RHEA:13725"/>
        <dbReference type="ChEBI" id="CHEBI:15378"/>
        <dbReference type="ChEBI" id="CHEBI:57287"/>
        <dbReference type="ChEBI" id="CHEBI:57288"/>
        <dbReference type="ChEBI" id="CHEBI:57776"/>
        <dbReference type="ChEBI" id="CHEBI:58516"/>
        <dbReference type="EC" id="2.3.1.157"/>
    </reaction>
</comment>
<comment type="catalytic activity">
    <reaction evidence="1">
        <text>N-acetyl-alpha-D-glucosamine 1-phosphate + UTP + H(+) = UDP-N-acetyl-alpha-D-glucosamine + diphosphate</text>
        <dbReference type="Rhea" id="RHEA:13509"/>
        <dbReference type="ChEBI" id="CHEBI:15378"/>
        <dbReference type="ChEBI" id="CHEBI:33019"/>
        <dbReference type="ChEBI" id="CHEBI:46398"/>
        <dbReference type="ChEBI" id="CHEBI:57705"/>
        <dbReference type="ChEBI" id="CHEBI:57776"/>
        <dbReference type="EC" id="2.7.7.23"/>
    </reaction>
</comment>
<comment type="cofactor">
    <cofactor evidence="1">
        <name>Mg(2+)</name>
        <dbReference type="ChEBI" id="CHEBI:18420"/>
    </cofactor>
    <text evidence="1">Binds 1 Mg(2+) ion per subunit.</text>
</comment>
<comment type="pathway">
    <text evidence="1">Nucleotide-sugar biosynthesis; UDP-N-acetyl-alpha-D-glucosamine biosynthesis; N-acetyl-alpha-D-glucosamine 1-phosphate from alpha-D-glucosamine 6-phosphate (route II): step 2/2.</text>
</comment>
<comment type="pathway">
    <text evidence="1">Nucleotide-sugar biosynthesis; UDP-N-acetyl-alpha-D-glucosamine biosynthesis; UDP-N-acetyl-alpha-D-glucosamine from N-acetyl-alpha-D-glucosamine 1-phosphate: step 1/1.</text>
</comment>
<comment type="pathway">
    <text evidence="1">Bacterial outer membrane biogenesis; LPS lipid A biosynthesis.</text>
</comment>
<comment type="subunit">
    <text evidence="1">Homotrimer.</text>
</comment>
<comment type="subcellular location">
    <subcellularLocation>
        <location evidence="1">Cytoplasm</location>
    </subcellularLocation>
</comment>
<comment type="similarity">
    <text evidence="1">In the N-terminal section; belongs to the N-acetylglucosamine-1-phosphate uridyltransferase family.</text>
</comment>
<comment type="similarity">
    <text evidence="1">In the C-terminal section; belongs to the transferase hexapeptide repeat family.</text>
</comment>
<comment type="sequence caution" evidence="2">
    <conflict type="erroneous initiation">
        <sequence resource="EMBL-CDS" id="ABC38024"/>
    </conflict>
</comment>
<protein>
    <recommendedName>
        <fullName evidence="1">Bifunctional protein GlmU</fullName>
    </recommendedName>
    <domain>
        <recommendedName>
            <fullName evidence="1">UDP-N-acetylglucosamine pyrophosphorylase</fullName>
            <ecNumber evidence="1">2.7.7.23</ecNumber>
        </recommendedName>
        <alternativeName>
            <fullName evidence="1">N-acetylglucosamine-1-phosphate uridyltransferase</fullName>
        </alternativeName>
    </domain>
    <domain>
        <recommendedName>
            <fullName evidence="1">Glucosamine-1-phosphate N-acetyltransferase</fullName>
            <ecNumber evidence="1">2.3.1.157</ecNumber>
        </recommendedName>
    </domain>
</protein>
<dbReference type="EC" id="2.7.7.23" evidence="1"/>
<dbReference type="EC" id="2.3.1.157" evidence="1"/>
<dbReference type="EMBL" id="CP000086">
    <property type="protein sequence ID" value="ABC38024.1"/>
    <property type="status" value="ALT_INIT"/>
    <property type="molecule type" value="Genomic_DNA"/>
</dbReference>
<dbReference type="RefSeq" id="WP_009893360.1">
    <property type="nucleotide sequence ID" value="NZ_CP008785.1"/>
</dbReference>
<dbReference type="SMR" id="Q2T1V2"/>
<dbReference type="GeneID" id="45120056"/>
<dbReference type="KEGG" id="bte:BTH_I0289"/>
<dbReference type="HOGENOM" id="CLU_029499_15_2_4"/>
<dbReference type="UniPathway" id="UPA00113">
    <property type="reaction ID" value="UER00532"/>
</dbReference>
<dbReference type="UniPathway" id="UPA00113">
    <property type="reaction ID" value="UER00533"/>
</dbReference>
<dbReference type="UniPathway" id="UPA00973"/>
<dbReference type="Proteomes" id="UP000001930">
    <property type="component" value="Chromosome I"/>
</dbReference>
<dbReference type="GO" id="GO:0005737">
    <property type="term" value="C:cytoplasm"/>
    <property type="evidence" value="ECO:0007669"/>
    <property type="project" value="UniProtKB-SubCell"/>
</dbReference>
<dbReference type="GO" id="GO:0016020">
    <property type="term" value="C:membrane"/>
    <property type="evidence" value="ECO:0007669"/>
    <property type="project" value="GOC"/>
</dbReference>
<dbReference type="GO" id="GO:0019134">
    <property type="term" value="F:glucosamine-1-phosphate N-acetyltransferase activity"/>
    <property type="evidence" value="ECO:0007669"/>
    <property type="project" value="UniProtKB-UniRule"/>
</dbReference>
<dbReference type="GO" id="GO:0000287">
    <property type="term" value="F:magnesium ion binding"/>
    <property type="evidence" value="ECO:0007669"/>
    <property type="project" value="UniProtKB-UniRule"/>
</dbReference>
<dbReference type="GO" id="GO:0003977">
    <property type="term" value="F:UDP-N-acetylglucosamine diphosphorylase activity"/>
    <property type="evidence" value="ECO:0007669"/>
    <property type="project" value="UniProtKB-UniRule"/>
</dbReference>
<dbReference type="GO" id="GO:0000902">
    <property type="term" value="P:cell morphogenesis"/>
    <property type="evidence" value="ECO:0007669"/>
    <property type="project" value="UniProtKB-UniRule"/>
</dbReference>
<dbReference type="GO" id="GO:0071555">
    <property type="term" value="P:cell wall organization"/>
    <property type="evidence" value="ECO:0007669"/>
    <property type="project" value="UniProtKB-KW"/>
</dbReference>
<dbReference type="GO" id="GO:0009245">
    <property type="term" value="P:lipid A biosynthetic process"/>
    <property type="evidence" value="ECO:0007669"/>
    <property type="project" value="UniProtKB-UniRule"/>
</dbReference>
<dbReference type="GO" id="GO:0009252">
    <property type="term" value="P:peptidoglycan biosynthetic process"/>
    <property type="evidence" value="ECO:0007669"/>
    <property type="project" value="UniProtKB-UniRule"/>
</dbReference>
<dbReference type="GO" id="GO:0008360">
    <property type="term" value="P:regulation of cell shape"/>
    <property type="evidence" value="ECO:0007669"/>
    <property type="project" value="UniProtKB-KW"/>
</dbReference>
<dbReference type="GO" id="GO:0006048">
    <property type="term" value="P:UDP-N-acetylglucosamine biosynthetic process"/>
    <property type="evidence" value="ECO:0007669"/>
    <property type="project" value="UniProtKB-UniPathway"/>
</dbReference>
<dbReference type="CDD" id="cd02540">
    <property type="entry name" value="GT2_GlmU_N_bac"/>
    <property type="match status" value="1"/>
</dbReference>
<dbReference type="CDD" id="cd03353">
    <property type="entry name" value="LbH_GlmU_C"/>
    <property type="match status" value="1"/>
</dbReference>
<dbReference type="Gene3D" id="2.160.10.10">
    <property type="entry name" value="Hexapeptide repeat proteins"/>
    <property type="match status" value="1"/>
</dbReference>
<dbReference type="Gene3D" id="3.90.550.10">
    <property type="entry name" value="Spore Coat Polysaccharide Biosynthesis Protein SpsA, Chain A"/>
    <property type="match status" value="1"/>
</dbReference>
<dbReference type="HAMAP" id="MF_01631">
    <property type="entry name" value="GlmU"/>
    <property type="match status" value="1"/>
</dbReference>
<dbReference type="InterPro" id="IPR005882">
    <property type="entry name" value="Bifunctional_GlmU"/>
</dbReference>
<dbReference type="InterPro" id="IPR050065">
    <property type="entry name" value="GlmU-like"/>
</dbReference>
<dbReference type="InterPro" id="IPR038009">
    <property type="entry name" value="GlmU_C_LbH"/>
</dbReference>
<dbReference type="InterPro" id="IPR001451">
    <property type="entry name" value="Hexapep"/>
</dbReference>
<dbReference type="InterPro" id="IPR025877">
    <property type="entry name" value="MobA-like_NTP_Trfase"/>
</dbReference>
<dbReference type="InterPro" id="IPR029044">
    <property type="entry name" value="Nucleotide-diphossugar_trans"/>
</dbReference>
<dbReference type="InterPro" id="IPR011004">
    <property type="entry name" value="Trimer_LpxA-like_sf"/>
</dbReference>
<dbReference type="NCBIfam" id="TIGR01173">
    <property type="entry name" value="glmU"/>
    <property type="match status" value="1"/>
</dbReference>
<dbReference type="PANTHER" id="PTHR43584:SF3">
    <property type="entry name" value="BIFUNCTIONAL PROTEIN GLMU"/>
    <property type="match status" value="1"/>
</dbReference>
<dbReference type="PANTHER" id="PTHR43584">
    <property type="entry name" value="NUCLEOTIDYL TRANSFERASE"/>
    <property type="match status" value="1"/>
</dbReference>
<dbReference type="Pfam" id="PF00132">
    <property type="entry name" value="Hexapep"/>
    <property type="match status" value="2"/>
</dbReference>
<dbReference type="Pfam" id="PF12804">
    <property type="entry name" value="NTP_transf_3"/>
    <property type="match status" value="1"/>
</dbReference>
<dbReference type="SUPFAM" id="SSF53448">
    <property type="entry name" value="Nucleotide-diphospho-sugar transferases"/>
    <property type="match status" value="1"/>
</dbReference>
<dbReference type="SUPFAM" id="SSF51161">
    <property type="entry name" value="Trimeric LpxA-like enzymes"/>
    <property type="match status" value="1"/>
</dbReference>
<accession>Q2T1V2</accession>
<reference key="1">
    <citation type="journal article" date="2005" name="BMC Genomics">
        <title>Bacterial genome adaptation to niches: divergence of the potential virulence genes in three Burkholderia species of different survival strategies.</title>
        <authorList>
            <person name="Kim H.S."/>
            <person name="Schell M.A."/>
            <person name="Yu Y."/>
            <person name="Ulrich R.L."/>
            <person name="Sarria S.H."/>
            <person name="Nierman W.C."/>
            <person name="DeShazer D."/>
        </authorList>
    </citation>
    <scope>NUCLEOTIDE SEQUENCE [LARGE SCALE GENOMIC DNA]</scope>
    <source>
        <strain>ATCC 700388 / DSM 13276 / CCUG 48851 / CIP 106301 / E264</strain>
    </source>
</reference>